<gene>
    <name evidence="2" type="primary">SPH17</name>
    <name evidence="3" type="ordered locus">At4g08558</name>
    <name evidence="3" type="ORF">T15F16</name>
</gene>
<reference key="1">
    <citation type="journal article" date="1999" name="Nature">
        <title>Sequence and analysis of chromosome 4 of the plant Arabidopsis thaliana.</title>
        <authorList>
            <person name="Mayer K.F.X."/>
            <person name="Schueller C."/>
            <person name="Wambutt R."/>
            <person name="Murphy G."/>
            <person name="Volckaert G."/>
            <person name="Pohl T."/>
            <person name="Duesterhoeft A."/>
            <person name="Stiekema W."/>
            <person name="Entian K.-D."/>
            <person name="Terryn N."/>
            <person name="Harris B."/>
            <person name="Ansorge W."/>
            <person name="Brandt P."/>
            <person name="Grivell L.A."/>
            <person name="Rieger M."/>
            <person name="Weichselgartner M."/>
            <person name="de Simone V."/>
            <person name="Obermaier B."/>
            <person name="Mache R."/>
            <person name="Mueller M."/>
            <person name="Kreis M."/>
            <person name="Delseny M."/>
            <person name="Puigdomenech P."/>
            <person name="Watson M."/>
            <person name="Schmidtheini T."/>
            <person name="Reichert B."/>
            <person name="Portetelle D."/>
            <person name="Perez-Alonso M."/>
            <person name="Boutry M."/>
            <person name="Bancroft I."/>
            <person name="Vos P."/>
            <person name="Hoheisel J."/>
            <person name="Zimmermann W."/>
            <person name="Wedler H."/>
            <person name="Ridley P."/>
            <person name="Langham S.-A."/>
            <person name="McCullagh B."/>
            <person name="Bilham L."/>
            <person name="Robben J."/>
            <person name="van der Schueren J."/>
            <person name="Grymonprez B."/>
            <person name="Chuang Y.-J."/>
            <person name="Vandenbussche F."/>
            <person name="Braeken M."/>
            <person name="Weltjens I."/>
            <person name="Voet M."/>
            <person name="Bastiaens I."/>
            <person name="Aert R."/>
            <person name="Defoor E."/>
            <person name="Weitzenegger T."/>
            <person name="Bothe G."/>
            <person name="Ramsperger U."/>
            <person name="Hilbert H."/>
            <person name="Braun M."/>
            <person name="Holzer E."/>
            <person name="Brandt A."/>
            <person name="Peters S."/>
            <person name="van Staveren M."/>
            <person name="Dirkse W."/>
            <person name="Mooijman P."/>
            <person name="Klein Lankhorst R."/>
            <person name="Rose M."/>
            <person name="Hauf J."/>
            <person name="Koetter P."/>
            <person name="Berneiser S."/>
            <person name="Hempel S."/>
            <person name="Feldpausch M."/>
            <person name="Lamberth S."/>
            <person name="Van den Daele H."/>
            <person name="De Keyser A."/>
            <person name="Buysshaert C."/>
            <person name="Gielen J."/>
            <person name="Villarroel R."/>
            <person name="De Clercq R."/>
            <person name="van Montagu M."/>
            <person name="Rogers J."/>
            <person name="Cronin A."/>
            <person name="Quail M.A."/>
            <person name="Bray-Allen S."/>
            <person name="Clark L."/>
            <person name="Doggett J."/>
            <person name="Hall S."/>
            <person name="Kay M."/>
            <person name="Lennard N."/>
            <person name="McLay K."/>
            <person name="Mayes R."/>
            <person name="Pettett A."/>
            <person name="Rajandream M.A."/>
            <person name="Lyne M."/>
            <person name="Benes V."/>
            <person name="Rechmann S."/>
            <person name="Borkova D."/>
            <person name="Bloecker H."/>
            <person name="Scharfe M."/>
            <person name="Grimm M."/>
            <person name="Loehnert T.-H."/>
            <person name="Dose S."/>
            <person name="de Haan M."/>
            <person name="Maarse A.C."/>
            <person name="Schaefer M."/>
            <person name="Mueller-Auer S."/>
            <person name="Gabel C."/>
            <person name="Fuchs M."/>
            <person name="Fartmann B."/>
            <person name="Granderath K."/>
            <person name="Dauner D."/>
            <person name="Herzl A."/>
            <person name="Neumann S."/>
            <person name="Argiriou A."/>
            <person name="Vitale D."/>
            <person name="Liguori R."/>
            <person name="Piravandi E."/>
            <person name="Massenet O."/>
            <person name="Quigley F."/>
            <person name="Clabauld G."/>
            <person name="Muendlein A."/>
            <person name="Felber R."/>
            <person name="Schnabl S."/>
            <person name="Hiller R."/>
            <person name="Schmidt W."/>
            <person name="Lecharny A."/>
            <person name="Aubourg S."/>
            <person name="Chefdor F."/>
            <person name="Cooke R."/>
            <person name="Berger C."/>
            <person name="Monfort A."/>
            <person name="Casacuberta E."/>
            <person name="Gibbons T."/>
            <person name="Weber N."/>
            <person name="Vandenbol M."/>
            <person name="Bargues M."/>
            <person name="Terol J."/>
            <person name="Torres A."/>
            <person name="Perez-Perez A."/>
            <person name="Purnelle B."/>
            <person name="Bent E."/>
            <person name="Johnson S."/>
            <person name="Tacon D."/>
            <person name="Jesse T."/>
            <person name="Heijnen L."/>
            <person name="Schwarz S."/>
            <person name="Scholler P."/>
            <person name="Heber S."/>
            <person name="Francs P."/>
            <person name="Bielke C."/>
            <person name="Frishman D."/>
            <person name="Haase D."/>
            <person name="Lemcke K."/>
            <person name="Mewes H.-W."/>
            <person name="Stocker S."/>
            <person name="Zaccaria P."/>
            <person name="Bevan M."/>
            <person name="Wilson R.K."/>
            <person name="de la Bastide M."/>
            <person name="Habermann K."/>
            <person name="Parnell L."/>
            <person name="Dedhia N."/>
            <person name="Gnoj L."/>
            <person name="Schutz K."/>
            <person name="Huang E."/>
            <person name="Spiegel L."/>
            <person name="Sekhon M."/>
            <person name="Murray J."/>
            <person name="Sheet P."/>
            <person name="Cordes M."/>
            <person name="Abu-Threideh J."/>
            <person name="Stoneking T."/>
            <person name="Kalicki J."/>
            <person name="Graves T."/>
            <person name="Harmon G."/>
            <person name="Edwards J."/>
            <person name="Latreille P."/>
            <person name="Courtney L."/>
            <person name="Cloud J."/>
            <person name="Abbott A."/>
            <person name="Scott K."/>
            <person name="Johnson D."/>
            <person name="Minx P."/>
            <person name="Bentley D."/>
            <person name="Fulton B."/>
            <person name="Miller N."/>
            <person name="Greco T."/>
            <person name="Kemp K."/>
            <person name="Kramer J."/>
            <person name="Fulton L."/>
            <person name="Mardis E."/>
            <person name="Dante M."/>
            <person name="Pepin K."/>
            <person name="Hillier L.W."/>
            <person name="Nelson J."/>
            <person name="Spieth J."/>
            <person name="Ryan E."/>
            <person name="Andrews S."/>
            <person name="Geisel C."/>
            <person name="Layman D."/>
            <person name="Du H."/>
            <person name="Ali J."/>
            <person name="Berghoff A."/>
            <person name="Jones K."/>
            <person name="Drone K."/>
            <person name="Cotton M."/>
            <person name="Joshu C."/>
            <person name="Antonoiu B."/>
            <person name="Zidanic M."/>
            <person name="Strong C."/>
            <person name="Sun H."/>
            <person name="Lamar B."/>
            <person name="Yordan C."/>
            <person name="Ma P."/>
            <person name="Zhong J."/>
            <person name="Preston R."/>
            <person name="Vil D."/>
            <person name="Shekher M."/>
            <person name="Matero A."/>
            <person name="Shah R."/>
            <person name="Swaby I.K."/>
            <person name="O'Shaughnessy A."/>
            <person name="Rodriguez M."/>
            <person name="Hoffman J."/>
            <person name="Till S."/>
            <person name="Granat S."/>
            <person name="Shohdy N."/>
            <person name="Hasegawa A."/>
            <person name="Hameed A."/>
            <person name="Lodhi M."/>
            <person name="Johnson A."/>
            <person name="Chen E."/>
            <person name="Marra M.A."/>
            <person name="Martienssen R."/>
            <person name="McCombie W.R."/>
        </authorList>
    </citation>
    <scope>NUCLEOTIDE SEQUENCE [LARGE SCALE GENOMIC DNA]</scope>
    <source>
        <strain>cv. Columbia</strain>
    </source>
</reference>
<reference key="2">
    <citation type="journal article" date="2017" name="Plant J.">
        <title>Araport11: a complete reannotation of the Arabidopsis thaliana reference genome.</title>
        <authorList>
            <person name="Cheng C.Y."/>
            <person name="Krishnakumar V."/>
            <person name="Chan A.P."/>
            <person name="Thibaud-Nissen F."/>
            <person name="Schobel S."/>
            <person name="Town C.D."/>
        </authorList>
    </citation>
    <scope>GENOME REANNOTATION</scope>
    <source>
        <strain>cv. Columbia</strain>
    </source>
</reference>
<reference key="3">
    <citation type="journal article" date="1999" name="Plant Mol. Biol.">
        <title>Analysis of Arabidopsis genome sequence reveals a large new gene family in plants.</title>
        <authorList>
            <person name="Ride J.P."/>
            <person name="Davies E.M."/>
            <person name="Franklin F.C.H."/>
            <person name="Marshall D.F."/>
        </authorList>
    </citation>
    <scope>GENE FAMILY</scope>
    <scope>NOMENCLATURE</scope>
    <source>
        <strain>cv. Columbia</strain>
    </source>
</reference>
<protein>
    <recommendedName>
        <fullName evidence="2">S-protein homolog 17</fullName>
    </recommendedName>
</protein>
<sequence>MKNLSIFMFVFSLCMFGHVSRARIRIANELKFKKNLWMRCYSKDDVLGPHIIPIGGHFLDYFGTNFWGTTRFMCTLRQGPNYIHYQSFTAFKLFSMEDHGGLWDWRAREDGIYLKKEGNKFIKNPVNMHKVYDWIN</sequence>
<proteinExistence type="inferred from homology"/>
<comment type="subcellular location">
    <subcellularLocation>
        <location evidence="4">Secreted</location>
    </subcellularLocation>
</comment>
<comment type="similarity">
    <text evidence="3">Belongs to the plant self-incompatibility (S1) protein family.</text>
</comment>
<comment type="sequence caution" evidence="3">
    <conflict type="erroneous gene model prediction">
        <sequence resource="EMBL-CDS" id="AAC28191"/>
    </conflict>
    <text>The predicted gene At4g08560 has been split into 2 genes: At4g08558 and At4g08560.</text>
</comment>
<comment type="sequence caution" evidence="3">
    <conflict type="erroneous gene model prediction">
        <sequence resource="EMBL-CDS" id="AEE82658"/>
    </conflict>
    <text>The predicted gene At4g08560 has been split into 2 genes: At4g08558 and At4g08560.</text>
</comment>
<comment type="sequence caution" evidence="3">
    <conflict type="erroneous gene model prediction">
        <sequence resource="EMBL-CDS" id="CAB77981"/>
    </conflict>
    <text>The predicted gene At4g08560 has been split into 2 genes: At4g08558 and At4g08560.</text>
</comment>
<organism>
    <name type="scientific">Arabidopsis thaliana</name>
    <name type="common">Mouse-ear cress</name>
    <dbReference type="NCBI Taxonomy" id="3702"/>
    <lineage>
        <taxon>Eukaryota</taxon>
        <taxon>Viridiplantae</taxon>
        <taxon>Streptophyta</taxon>
        <taxon>Embryophyta</taxon>
        <taxon>Tracheophyta</taxon>
        <taxon>Spermatophyta</taxon>
        <taxon>Magnoliopsida</taxon>
        <taxon>eudicotyledons</taxon>
        <taxon>Gunneridae</taxon>
        <taxon>Pentapetalae</taxon>
        <taxon>rosids</taxon>
        <taxon>malvids</taxon>
        <taxon>Brassicales</taxon>
        <taxon>Brassicaceae</taxon>
        <taxon>Camelineae</taxon>
        <taxon>Arabidopsis</taxon>
    </lineage>
</organism>
<name>SPH17_ARATH</name>
<evidence type="ECO:0000255" key="1"/>
<evidence type="ECO:0000303" key="2">
    <source>
    </source>
</evidence>
<evidence type="ECO:0000305" key="3"/>
<evidence type="ECO:0000305" key="4">
    <source>
    </source>
</evidence>
<dbReference type="EMBL" id="AF076275">
    <property type="protein sequence ID" value="AAC28191.1"/>
    <property type="status" value="ALT_SEQ"/>
    <property type="molecule type" value="Genomic_DNA"/>
</dbReference>
<dbReference type="EMBL" id="AL161512">
    <property type="protein sequence ID" value="CAB77981.1"/>
    <property type="status" value="ALT_SEQ"/>
    <property type="molecule type" value="Genomic_DNA"/>
</dbReference>
<dbReference type="EMBL" id="CP002687">
    <property type="protein sequence ID" value="AEE82658.1"/>
    <property type="status" value="ALT_SEQ"/>
    <property type="molecule type" value="Genomic_DNA"/>
</dbReference>
<dbReference type="SMR" id="P0DN94"/>
<dbReference type="PaxDb" id="3702-AT4G08560.1"/>
<dbReference type="KEGG" id="ath:AT4G08560"/>
<dbReference type="Araport" id="AT4G08558"/>
<dbReference type="TAIR" id="AT4G08558"/>
<dbReference type="InParanoid" id="P0DN94"/>
<dbReference type="PRO" id="PR:P0DN94"/>
<dbReference type="Proteomes" id="UP000006548">
    <property type="component" value="Chromosome 4"/>
</dbReference>
<dbReference type="ExpressionAtlas" id="P0DN94">
    <property type="expression patterns" value="baseline and differential"/>
</dbReference>
<dbReference type="GO" id="GO:0005576">
    <property type="term" value="C:extracellular region"/>
    <property type="evidence" value="ECO:0007669"/>
    <property type="project" value="UniProtKB-SubCell"/>
</dbReference>
<dbReference type="GO" id="GO:0006417">
    <property type="term" value="P:regulation of translation"/>
    <property type="evidence" value="ECO:0007669"/>
    <property type="project" value="UniProtKB-KW"/>
</dbReference>
<dbReference type="GO" id="GO:0060320">
    <property type="term" value="P:rejection of self pollen"/>
    <property type="evidence" value="ECO:0007669"/>
    <property type="project" value="UniProtKB-KW"/>
</dbReference>
<dbReference type="InterPro" id="IPR010264">
    <property type="entry name" value="Self-incomp_S1"/>
</dbReference>
<dbReference type="PANTHER" id="PTHR31232">
    <property type="match status" value="1"/>
</dbReference>
<dbReference type="PANTHER" id="PTHR31232:SF54">
    <property type="entry name" value="S-PROTEIN HOMOLOG-RELATED"/>
    <property type="match status" value="1"/>
</dbReference>
<dbReference type="Pfam" id="PF05938">
    <property type="entry name" value="Self-incomp_S1"/>
    <property type="match status" value="1"/>
</dbReference>
<feature type="signal peptide" evidence="1">
    <location>
        <begin position="1"/>
        <end position="22"/>
    </location>
</feature>
<feature type="chain" id="PRO_0000439702" description="S-protein homolog 17">
    <location>
        <begin position="23"/>
        <end position="136"/>
    </location>
</feature>
<keyword id="KW-1185">Reference proteome</keyword>
<keyword id="KW-0964">Secreted</keyword>
<keyword id="KW-0713">Self-incompatibility</keyword>
<keyword id="KW-0732">Signal</keyword>
<keyword id="KW-0810">Translation regulation</keyword>
<accession>P0DN94</accession>
<accession>O81465</accession>